<evidence type="ECO:0000255" key="1"/>
<feature type="chain" id="PRO_0000220784" description="Uncharacterized ATP-binding protein UU034">
    <location>
        <begin position="1"/>
        <end position="355"/>
    </location>
</feature>
<feature type="binding site" evidence="1">
    <location>
        <begin position="58"/>
        <end position="65"/>
    </location>
    <ligand>
        <name>ATP</name>
        <dbReference type="ChEBI" id="CHEBI:30616"/>
    </ligand>
</feature>
<organism>
    <name type="scientific">Ureaplasma parvum serovar 3 (strain ATCC 700970)</name>
    <dbReference type="NCBI Taxonomy" id="273119"/>
    <lineage>
        <taxon>Bacteria</taxon>
        <taxon>Bacillati</taxon>
        <taxon>Mycoplasmatota</taxon>
        <taxon>Mycoplasmoidales</taxon>
        <taxon>Mycoplasmoidaceae</taxon>
        <taxon>Ureaplasma</taxon>
    </lineage>
</organism>
<reference key="1">
    <citation type="journal article" date="2000" name="Nature">
        <title>The complete sequence of the mucosal pathogen Ureaplasma urealyticum.</title>
        <authorList>
            <person name="Glass J.I."/>
            <person name="Lefkowitz E.J."/>
            <person name="Glass J.S."/>
            <person name="Heiner C.R."/>
            <person name="Chen E.Y."/>
            <person name="Cassell G.H."/>
        </authorList>
    </citation>
    <scope>NUCLEOTIDE SEQUENCE [LARGE SCALE GENOMIC DNA]</scope>
    <source>
        <strain>ATCC 700970</strain>
    </source>
</reference>
<gene>
    <name type="ordered locus">UU034</name>
</gene>
<proteinExistence type="predicted"/>
<name>Y034_UREPA</name>
<accession>Q9PRB1</accession>
<protein>
    <recommendedName>
        <fullName>Uncharacterized ATP-binding protein UU034</fullName>
    </recommendedName>
</protein>
<sequence>MLISKHEERVKSILSARMENGNLRSRENTQVEFKQSFNKGNIAIYAKTMAAFSNNSGGYIIFGIKDSPRSIIGLQNSNFENIQQEDLTDSINNLFSPSINWELGSFILKEKEINSNGDVIIVQKIIGWIYTEESNIKPVIAQKNNSSEKIVNGDIFYRYRARTEKIKYAEMEQIINCRMKQERDSLFKVFEFIRNNGATNLGIVDYNNGKLSTPYGVDVVLEKNLIAKLLKKAKFIKEGSFSENEGIPVIKVTGNINLAEEVPVPLENLDETYPYIQKQLAEKLNITPQKLYALIWYFKMKESKKYHLEITTSKTNKTHKFSKFALLFLKEKIIELDENKNELNNIISKFNNRKK</sequence>
<dbReference type="EMBL" id="AF222894">
    <property type="protein sequence ID" value="AAF30439.1"/>
    <property type="molecule type" value="Genomic_DNA"/>
</dbReference>
<dbReference type="RefSeq" id="WP_010891657.1">
    <property type="nucleotide sequence ID" value="NC_002162.1"/>
</dbReference>
<dbReference type="STRING" id="273119.UU034"/>
<dbReference type="EnsemblBacteria" id="AAF30439">
    <property type="protein sequence ID" value="AAF30439"/>
    <property type="gene ID" value="UU034"/>
</dbReference>
<dbReference type="GeneID" id="29672393"/>
<dbReference type="KEGG" id="uur:UU034"/>
<dbReference type="PATRIC" id="fig|273119.6.peg.36"/>
<dbReference type="eggNOG" id="COG2865">
    <property type="taxonomic scope" value="Bacteria"/>
</dbReference>
<dbReference type="HOGENOM" id="CLU_820540_0_0_14"/>
<dbReference type="OrthoDB" id="8431612at2"/>
<dbReference type="Proteomes" id="UP000000423">
    <property type="component" value="Chromosome"/>
</dbReference>
<dbReference type="GO" id="GO:0005524">
    <property type="term" value="F:ATP binding"/>
    <property type="evidence" value="ECO:0007669"/>
    <property type="project" value="UniProtKB-KW"/>
</dbReference>
<dbReference type="Gene3D" id="3.30.950.30">
    <property type="entry name" value="Schlafen, AAA domain"/>
    <property type="match status" value="1"/>
</dbReference>
<dbReference type="InterPro" id="IPR007421">
    <property type="entry name" value="Schlafen_AlbA_2_dom"/>
</dbReference>
<dbReference type="InterPro" id="IPR038461">
    <property type="entry name" value="Schlafen_AlbA_2_dom_sf"/>
</dbReference>
<dbReference type="PANTHER" id="PTHR30595">
    <property type="entry name" value="GLPR-RELATED TRANSCRIPTIONAL REPRESSOR"/>
    <property type="match status" value="1"/>
</dbReference>
<dbReference type="PANTHER" id="PTHR30595:SF6">
    <property type="entry name" value="SCHLAFEN ALBA-2 DOMAIN-CONTAINING PROTEIN"/>
    <property type="match status" value="1"/>
</dbReference>
<dbReference type="Pfam" id="PF04326">
    <property type="entry name" value="SLFN_AlbA_2"/>
    <property type="match status" value="1"/>
</dbReference>
<keyword id="KW-0067">ATP-binding</keyword>
<keyword id="KW-0547">Nucleotide-binding</keyword>
<keyword id="KW-1185">Reference proteome</keyword>